<name>HPPA_RHIME</name>
<protein>
    <recommendedName>
        <fullName evidence="2">K(+)-insensitive pyrophosphate-energized proton pump</fullName>
        <ecNumber evidence="2">7.1.3.1</ecNumber>
    </recommendedName>
    <alternativeName>
        <fullName evidence="2">Membrane-bound proton-translocating pyrophosphatase</fullName>
    </alternativeName>
    <alternativeName>
        <fullName evidence="2">Pyrophosphate-energized inorganic pyrophosphatase</fullName>
        <shortName evidence="2">H(+)-PPase</shortName>
    </alternativeName>
</protein>
<feature type="chain" id="PRO_0000217027" description="K(+)-insensitive pyrophosphate-energized proton pump">
    <location>
        <begin position="1"/>
        <end position="711"/>
    </location>
</feature>
<feature type="transmembrane region" description="Helical" evidence="2">
    <location>
        <begin position="1"/>
        <end position="21"/>
    </location>
</feature>
<feature type="transmembrane region" description="Helical" evidence="2">
    <location>
        <begin position="48"/>
        <end position="70"/>
    </location>
</feature>
<feature type="transmembrane region" description="Helical" evidence="2">
    <location>
        <begin position="83"/>
        <end position="103"/>
    </location>
</feature>
<feature type="transmembrane region" description="Helical" evidence="2">
    <location>
        <begin position="126"/>
        <end position="146"/>
    </location>
</feature>
<feature type="transmembrane region" description="Helical" evidence="2">
    <location>
        <begin position="164"/>
        <end position="184"/>
    </location>
</feature>
<feature type="transmembrane region" description="Helical" evidence="2">
    <location>
        <begin position="239"/>
        <end position="259"/>
    </location>
</feature>
<feature type="transmembrane region" description="Helical" evidence="2">
    <location>
        <begin position="261"/>
        <end position="281"/>
    </location>
</feature>
<feature type="transmembrane region" description="Helical" evidence="2">
    <location>
        <begin position="296"/>
        <end position="316"/>
    </location>
</feature>
<feature type="transmembrane region" description="Helical" evidence="2">
    <location>
        <begin position="331"/>
        <end position="351"/>
    </location>
</feature>
<feature type="transmembrane region" description="Helical" evidence="2">
    <location>
        <begin position="382"/>
        <end position="402"/>
    </location>
</feature>
<feature type="transmembrane region" description="Helical" evidence="2">
    <location>
        <begin position="409"/>
        <end position="429"/>
    </location>
</feature>
<feature type="transmembrane region" description="Helical" evidence="2">
    <location>
        <begin position="468"/>
        <end position="488"/>
    </location>
</feature>
<feature type="transmembrane region" description="Helical" evidence="2">
    <location>
        <begin position="520"/>
        <end position="540"/>
    </location>
</feature>
<feature type="transmembrane region" description="Helical" evidence="2">
    <location>
        <begin position="589"/>
        <end position="609"/>
    </location>
</feature>
<feature type="transmembrane region" description="Helical" evidence="2">
    <location>
        <begin position="616"/>
        <end position="636"/>
    </location>
</feature>
<feature type="binding site" evidence="1">
    <location>
        <position position="186"/>
    </location>
    <ligand>
        <name>substrate</name>
    </ligand>
</feature>
<feature type="binding site" evidence="1">
    <location>
        <position position="189"/>
    </location>
    <ligand>
        <name>Mg(2+)</name>
        <dbReference type="ChEBI" id="CHEBI:18420"/>
        <label>1</label>
    </ligand>
</feature>
<feature type="binding site" evidence="1">
    <location>
        <position position="193"/>
    </location>
    <ligand>
        <name>Mg(2+)</name>
        <dbReference type="ChEBI" id="CHEBI:18420"/>
        <label>1</label>
    </ligand>
</feature>
<feature type="binding site" evidence="1">
    <location>
        <position position="216"/>
    </location>
    <ligand>
        <name>Mg(2+)</name>
        <dbReference type="ChEBI" id="CHEBI:18420"/>
        <label>2</label>
    </ligand>
</feature>
<feature type="binding site" evidence="1">
    <location>
        <position position="219"/>
    </location>
    <ligand>
        <name>Mg(2+)</name>
        <dbReference type="ChEBI" id="CHEBI:18420"/>
        <label>2</label>
    </ligand>
</feature>
<feature type="binding site" evidence="1">
    <location>
        <position position="437"/>
    </location>
    <ligand>
        <name>Mg(2+)</name>
        <dbReference type="ChEBI" id="CHEBI:18420"/>
        <label>2</label>
    </ligand>
</feature>
<feature type="binding site" evidence="1">
    <location>
        <position position="646"/>
    </location>
    <ligand>
        <name>Ca(2+)</name>
        <dbReference type="ChEBI" id="CHEBI:29108"/>
    </ligand>
</feature>
<feature type="binding site" evidence="1">
    <location>
        <position position="678"/>
    </location>
    <ligand>
        <name>Ca(2+)</name>
        <dbReference type="ChEBI" id="CHEBI:29108"/>
    </ligand>
</feature>
<feature type="binding site" evidence="1">
    <location>
        <position position="682"/>
    </location>
    <ligand>
        <name>Ca(2+)</name>
        <dbReference type="ChEBI" id="CHEBI:29108"/>
    </ligand>
</feature>
<feature type="binding site" evidence="1">
    <location>
        <position position="685"/>
    </location>
    <ligand>
        <name>substrate</name>
    </ligand>
</feature>
<feature type="site" description="Important for ion transport" evidence="1">
    <location>
        <position position="178"/>
    </location>
</feature>
<feature type="site" description="Important for ion transport" evidence="1">
    <location>
        <position position="223"/>
    </location>
</feature>
<feature type="site" description="Important for ion transport" evidence="1">
    <location>
        <position position="230"/>
    </location>
</feature>
<feature type="site" description="Determinant of potassium independence" evidence="2">
    <location>
        <position position="467"/>
    </location>
</feature>
<feature type="site" description="Important for ion transport" evidence="1">
    <location>
        <position position="686"/>
    </location>
</feature>
<feature type="site" description="Important for ion transport" evidence="1">
    <location>
        <position position="697"/>
    </location>
</feature>
<feature type="sequence conflict" description="In Ref. 3; AAL69329." evidence="3" ref="3">
    <original>I</original>
    <variation>V</variation>
    <location>
        <position position="38"/>
    </location>
</feature>
<feature type="sequence conflict" description="In Ref. 3; AAL69329." evidence="3" ref="3">
    <original>GL</original>
    <variation>DI</variation>
    <location>
        <begin position="116"/>
        <end position="117"/>
    </location>
</feature>
<feature type="sequence conflict" description="In Ref. 3; AAL69329." evidence="3" ref="3">
    <original>LILTAGLGHEPAARE</original>
    <variation>FVLIVWLGYAPADRA</variation>
    <location>
        <begin position="144"/>
        <end position="158"/>
    </location>
</feature>
<feature type="sequence conflict" description="In Ref. 3; AAL69329." evidence="3" ref="3">
    <original>A</original>
    <variation>S</variation>
    <location>
        <position position="162"/>
    </location>
</feature>
<feature type="sequence conflict" description="In Ref. 3; AAL69329." evidence="3" ref="3">
    <original>S</original>
    <variation>A</variation>
    <location>
        <position position="174"/>
    </location>
</feature>
<feature type="sequence conflict" description="In Ref. 3; AAL69329." evidence="3" ref="3">
    <original>A</original>
    <variation>V</variation>
    <location>
        <position position="177"/>
    </location>
</feature>
<feature type="sequence conflict" description="In Ref. 3; AAL69329." evidence="3" ref="3">
    <original>GIP</original>
    <variation>CIR</variation>
    <location>
        <begin position="201"/>
        <end position="203"/>
    </location>
</feature>
<feature type="sequence conflict" description="In Ref. 3; AAL69329." evidence="3" ref="3">
    <original>RN</original>
    <variation>CI</variation>
    <location>
        <begin position="208"/>
        <end position="209"/>
    </location>
</feature>
<feature type="sequence conflict" description="In Ref. 3; AAL69329." evidence="3" ref="3">
    <original>D</original>
    <variation>N</variation>
    <location>
        <position position="215"/>
    </location>
</feature>
<feature type="sequence conflict" description="In Ref. 3; AAL69329." evidence="3" ref="3">
    <original>D</original>
    <variation>H</variation>
    <location>
        <position position="219"/>
    </location>
</feature>
<feature type="sequence conflict" description="In Ref. 3; AAL69329." evidence="3" ref="3">
    <original>GD</original>
    <variation>CG</variation>
    <location>
        <begin position="222"/>
        <end position="223"/>
    </location>
</feature>
<feature type="sequence conflict" description="In Ref. 3; AAL69329." evidence="3" ref="3">
    <original>G</original>
    <variation>A</variation>
    <location>
        <position position="226"/>
    </location>
</feature>
<feature type="sequence conflict" description="In Ref. 3; AAL69329." evidence="3" ref="3">
    <original>S</original>
    <variation>T</variation>
    <location>
        <position position="238"/>
    </location>
</feature>
<feature type="sequence conflict" description="In Ref. 3; AAL69329." evidence="3" ref="3">
    <original>T</original>
    <variation>N</variation>
    <location>
        <position position="456"/>
    </location>
</feature>
<keyword id="KW-0106">Calcium</keyword>
<keyword id="KW-0997">Cell inner membrane</keyword>
<keyword id="KW-1003">Cell membrane</keyword>
<keyword id="KW-0375">Hydrogen ion transport</keyword>
<keyword id="KW-0406">Ion transport</keyword>
<keyword id="KW-0460">Magnesium</keyword>
<keyword id="KW-0472">Membrane</keyword>
<keyword id="KW-0479">Metal-binding</keyword>
<keyword id="KW-1185">Reference proteome</keyword>
<keyword id="KW-1278">Translocase</keyword>
<keyword id="KW-0812">Transmembrane</keyword>
<keyword id="KW-1133">Transmembrane helix</keyword>
<keyword id="KW-0813">Transport</keyword>
<reference key="1">
    <citation type="journal article" date="2001" name="Proc. Natl. Acad. Sci. U.S.A.">
        <title>Analysis of the chromosome sequence of the legume symbiont Sinorhizobium meliloti strain 1021.</title>
        <authorList>
            <person name="Capela D."/>
            <person name="Barloy-Hubler F."/>
            <person name="Gouzy J."/>
            <person name="Bothe G."/>
            <person name="Ampe F."/>
            <person name="Batut J."/>
            <person name="Boistard P."/>
            <person name="Becker A."/>
            <person name="Boutry M."/>
            <person name="Cadieu E."/>
            <person name="Dreano S."/>
            <person name="Gloux S."/>
            <person name="Godrie T."/>
            <person name="Goffeau A."/>
            <person name="Kahn D."/>
            <person name="Kiss E."/>
            <person name="Lelaure V."/>
            <person name="Masuy D."/>
            <person name="Pohl T."/>
            <person name="Portetelle D."/>
            <person name="Puehler A."/>
            <person name="Purnelle B."/>
            <person name="Ramsperger U."/>
            <person name="Renard C."/>
            <person name="Thebault P."/>
            <person name="Vandenbol M."/>
            <person name="Weidner S."/>
            <person name="Galibert F."/>
        </authorList>
    </citation>
    <scope>NUCLEOTIDE SEQUENCE [LARGE SCALE GENOMIC DNA]</scope>
    <source>
        <strain>1021</strain>
    </source>
</reference>
<reference key="2">
    <citation type="journal article" date="2001" name="Science">
        <title>The composite genome of the legume symbiont Sinorhizobium meliloti.</title>
        <authorList>
            <person name="Galibert F."/>
            <person name="Finan T.M."/>
            <person name="Long S.R."/>
            <person name="Puehler A."/>
            <person name="Abola P."/>
            <person name="Ampe F."/>
            <person name="Barloy-Hubler F."/>
            <person name="Barnett M.J."/>
            <person name="Becker A."/>
            <person name="Boistard P."/>
            <person name="Bothe G."/>
            <person name="Boutry M."/>
            <person name="Bowser L."/>
            <person name="Buhrmester J."/>
            <person name="Cadieu E."/>
            <person name="Capela D."/>
            <person name="Chain P."/>
            <person name="Cowie A."/>
            <person name="Davis R.W."/>
            <person name="Dreano S."/>
            <person name="Federspiel N.A."/>
            <person name="Fisher R.F."/>
            <person name="Gloux S."/>
            <person name="Godrie T."/>
            <person name="Goffeau A."/>
            <person name="Golding B."/>
            <person name="Gouzy J."/>
            <person name="Gurjal M."/>
            <person name="Hernandez-Lucas I."/>
            <person name="Hong A."/>
            <person name="Huizar L."/>
            <person name="Hyman R.W."/>
            <person name="Jones T."/>
            <person name="Kahn D."/>
            <person name="Kahn M.L."/>
            <person name="Kalman S."/>
            <person name="Keating D.H."/>
            <person name="Kiss E."/>
            <person name="Komp C."/>
            <person name="Lelaure V."/>
            <person name="Masuy D."/>
            <person name="Palm C."/>
            <person name="Peck M.C."/>
            <person name="Pohl T.M."/>
            <person name="Portetelle D."/>
            <person name="Purnelle B."/>
            <person name="Ramsperger U."/>
            <person name="Surzycki R."/>
            <person name="Thebault P."/>
            <person name="Vandenbol M."/>
            <person name="Vorhoelter F.J."/>
            <person name="Weidner S."/>
            <person name="Wells D.H."/>
            <person name="Wong K."/>
            <person name="Yeh K.-C."/>
            <person name="Batut J."/>
        </authorList>
    </citation>
    <scope>NUCLEOTIDE SEQUENCE [LARGE SCALE GENOMIC DNA]</scope>
    <source>
        <strain>1021</strain>
    </source>
</reference>
<reference key="3">
    <citation type="submission" date="2001-09" db="EMBL/GenBank/DDBJ databases">
        <title>High prevalence of the H+ proton-pumping inorganic pyrophosphatase gene in alpha proteobacteria and evidence of lateral transfer in its phylogeny.</title>
        <authorList>
            <person name="Jumas-Bilak E."/>
            <person name="Michaux-Charachon S."/>
            <person name="Teyssier C."/>
        </authorList>
    </citation>
    <scope>NUCLEOTIDE SEQUENCE [GENOMIC DNA] OF 35-698</scope>
    <source>
        <strain>RCR2011 / SU47</strain>
    </source>
</reference>
<dbReference type="EC" id="7.1.3.1" evidence="2"/>
<dbReference type="EMBL" id="AL591688">
    <property type="protein sequence ID" value="CAC45797.1"/>
    <property type="molecule type" value="Genomic_DNA"/>
</dbReference>
<dbReference type="EMBL" id="AF417513">
    <property type="protein sequence ID" value="AAL69329.1"/>
    <property type="molecule type" value="Genomic_DNA"/>
</dbReference>
<dbReference type="RefSeq" id="NP_385324.1">
    <property type="nucleotide sequence ID" value="NC_003047.1"/>
</dbReference>
<dbReference type="RefSeq" id="WP_010969115.1">
    <property type="nucleotide sequence ID" value="NC_003047.1"/>
</dbReference>
<dbReference type="SMR" id="Q8VRZ3"/>
<dbReference type="EnsemblBacteria" id="CAC45797">
    <property type="protein sequence ID" value="CAC45797"/>
    <property type="gene ID" value="SMc01780"/>
</dbReference>
<dbReference type="KEGG" id="sme:SMc01780"/>
<dbReference type="PATRIC" id="fig|266834.11.peg.2630"/>
<dbReference type="eggNOG" id="COG3808">
    <property type="taxonomic scope" value="Bacteria"/>
</dbReference>
<dbReference type="HOGENOM" id="CLU_008743_3_1_5"/>
<dbReference type="OrthoDB" id="9808652at2"/>
<dbReference type="Proteomes" id="UP000001976">
    <property type="component" value="Chromosome"/>
</dbReference>
<dbReference type="GO" id="GO:0005886">
    <property type="term" value="C:plasma membrane"/>
    <property type="evidence" value="ECO:0007669"/>
    <property type="project" value="UniProtKB-SubCell"/>
</dbReference>
<dbReference type="GO" id="GO:0009678">
    <property type="term" value="F:diphosphate hydrolysis-driven proton transmembrane transporter activity"/>
    <property type="evidence" value="ECO:0007669"/>
    <property type="project" value="UniProtKB-UniRule"/>
</dbReference>
<dbReference type="GO" id="GO:0004427">
    <property type="term" value="F:inorganic diphosphate phosphatase activity"/>
    <property type="evidence" value="ECO:0007669"/>
    <property type="project" value="UniProtKB-UniRule"/>
</dbReference>
<dbReference type="GO" id="GO:0000287">
    <property type="term" value="F:magnesium ion binding"/>
    <property type="evidence" value="ECO:0007669"/>
    <property type="project" value="UniProtKB-UniRule"/>
</dbReference>
<dbReference type="HAMAP" id="MF_01129">
    <property type="entry name" value="PPase_energized_pump"/>
    <property type="match status" value="1"/>
</dbReference>
<dbReference type="InterPro" id="IPR004131">
    <property type="entry name" value="PPase-energised_H-pump"/>
</dbReference>
<dbReference type="NCBIfam" id="NF001951">
    <property type="entry name" value="PRK00733.1-2"/>
    <property type="match status" value="1"/>
</dbReference>
<dbReference type="NCBIfam" id="NF001960">
    <property type="entry name" value="PRK00733.3-5"/>
    <property type="match status" value="1"/>
</dbReference>
<dbReference type="NCBIfam" id="TIGR01104">
    <property type="entry name" value="V_PPase"/>
    <property type="match status" value="1"/>
</dbReference>
<dbReference type="PANTHER" id="PTHR31998">
    <property type="entry name" value="K(+)-INSENSITIVE PYROPHOSPHATE-ENERGIZED PROTON PUMP"/>
    <property type="match status" value="1"/>
</dbReference>
<dbReference type="Pfam" id="PF03030">
    <property type="entry name" value="H_PPase"/>
    <property type="match status" value="1"/>
</dbReference>
<dbReference type="PIRSF" id="PIRSF001265">
    <property type="entry name" value="H+-PPase"/>
    <property type="match status" value="1"/>
</dbReference>
<proteinExistence type="inferred from homology"/>
<comment type="function">
    <text evidence="2">Proton pump that utilizes the energy of pyrophosphate hydrolysis as the driving force for proton movement across the membrane. Generates a proton motive force.</text>
</comment>
<comment type="catalytic activity">
    <reaction evidence="2">
        <text>diphosphate + H2O + H(+)(in) = 2 phosphate + 2 H(+)(out)</text>
        <dbReference type="Rhea" id="RHEA:13973"/>
        <dbReference type="ChEBI" id="CHEBI:15377"/>
        <dbReference type="ChEBI" id="CHEBI:15378"/>
        <dbReference type="ChEBI" id="CHEBI:33019"/>
        <dbReference type="ChEBI" id="CHEBI:43474"/>
        <dbReference type="EC" id="7.1.3.1"/>
    </reaction>
</comment>
<comment type="cofactor">
    <cofactor evidence="2">
        <name>Mg(2+)</name>
        <dbReference type="ChEBI" id="CHEBI:18420"/>
    </cofactor>
</comment>
<comment type="subunit">
    <text evidence="2">Homodimer.</text>
</comment>
<comment type="subcellular location">
    <subcellularLocation>
        <location evidence="2">Cell inner membrane</location>
        <topology evidence="2">Multi-pass membrane protein</topology>
    </subcellularLocation>
</comment>
<comment type="similarity">
    <text evidence="2">Belongs to the H(+)-translocating pyrophosphatase (TC 3.A.10) family. K(+)-insensitive subfamily.</text>
</comment>
<evidence type="ECO:0000250" key="1"/>
<evidence type="ECO:0000255" key="2">
    <source>
        <dbReference type="HAMAP-Rule" id="MF_01129"/>
    </source>
</evidence>
<evidence type="ECO:0000305" key="3"/>
<organism>
    <name type="scientific">Rhizobium meliloti (strain 1021)</name>
    <name type="common">Ensifer meliloti</name>
    <name type="synonym">Sinorhizobium meliloti</name>
    <dbReference type="NCBI Taxonomy" id="266834"/>
    <lineage>
        <taxon>Bacteria</taxon>
        <taxon>Pseudomonadati</taxon>
        <taxon>Pseudomonadota</taxon>
        <taxon>Alphaproteobacteria</taxon>
        <taxon>Hyphomicrobiales</taxon>
        <taxon>Rhizobiaceae</taxon>
        <taxon>Sinorhizobium/Ensifer group</taxon>
        <taxon>Sinorhizobium</taxon>
    </lineage>
</organism>
<gene>
    <name evidence="2" type="primary">hppA</name>
    <name type="ordered locus">R01218</name>
    <name type="ORF">SMc01780</name>
</gene>
<accession>Q8VRZ3</accession>
<accession>Q92QT7</accession>
<sequence>MTILLGVIACGLLSVVYAIWATKSVLAADQGNARMQEIAGFIREGAQAYLTRQYTTIAIVGVVVFIAAWLLLSGAAAIGFLIGAVLSGAAGFIGMHVSVRANVRTAQAASVSLASGLDIAFKSGAITGMLVAGLALLGVSVYYLILTAGLGHEPAAREVIDALVALGFGASLISIFARLGGGIFTKGADVGGDLVGKVEAGIPEDDPRNPATIADNVGDNVGDCAGMAADLFETYAVSVVATMVLASIFFAGAPVLATVMTYPLAICAACIITSIIGTFFVKLGANASIMGALYRGLIVTGALSILGLGAATSLTIGWGSIGTVAGMDITGWNLFLCGIIGLIVTALIVVITEYYTGTNKRPVNSIAQASVTGHGTNVIQGLAVSLESTALPAIVIVGGIIATYQFAGLFGTAIAVTAMLGLAGMIVALDAFGPVTDNAGGIAEMSHLPPEVRKSTDALDAVGNTTKAVTKGYAIGSAGLGALVLFAAYSNDLAYFAANGDKHPYFADVGTISFDLSNPYVVAGLIFGGLIPYLFGGIAMTAVGRAGSAVVEEVRRQFKEKPGIMEGKDRPDYGRAVDMLTKAAIREMIIPSLLPVLAPIVVYFGVLLISGSKASAFAALGASLLGVIVNGLFVAISMTSGGGAWDNAKKSFEDGFVDRNGTRHMKGSEAHKASVTGDTVGDPYKDTAGPAVNPAIKITNIVALLLLAVLA</sequence>